<proteinExistence type="inferred from homology"/>
<dbReference type="EMBL" id="CP000462">
    <property type="protein sequence ID" value="ABK36302.1"/>
    <property type="molecule type" value="Genomic_DNA"/>
</dbReference>
<dbReference type="RefSeq" id="WP_005307141.1">
    <property type="nucleotide sequence ID" value="NC_008570.1"/>
</dbReference>
<dbReference type="RefSeq" id="YP_854527.1">
    <property type="nucleotide sequence ID" value="NC_008570.1"/>
</dbReference>
<dbReference type="SMR" id="A0KEC3"/>
<dbReference type="STRING" id="380703.AHA_0001"/>
<dbReference type="EnsemblBacteria" id="ABK36302">
    <property type="protein sequence ID" value="ABK36302"/>
    <property type="gene ID" value="AHA_0001"/>
</dbReference>
<dbReference type="GeneID" id="47843307"/>
<dbReference type="KEGG" id="aha:AHA_0001"/>
<dbReference type="PATRIC" id="fig|380703.7.peg.2"/>
<dbReference type="eggNOG" id="COG0593">
    <property type="taxonomic scope" value="Bacteria"/>
</dbReference>
<dbReference type="HOGENOM" id="CLU_026910_0_1_6"/>
<dbReference type="OrthoDB" id="9807019at2"/>
<dbReference type="PRO" id="PR:A0KEC3"/>
<dbReference type="Proteomes" id="UP000000756">
    <property type="component" value="Chromosome"/>
</dbReference>
<dbReference type="GO" id="GO:0005737">
    <property type="term" value="C:cytoplasm"/>
    <property type="evidence" value="ECO:0007669"/>
    <property type="project" value="UniProtKB-SubCell"/>
</dbReference>
<dbReference type="GO" id="GO:0005886">
    <property type="term" value="C:plasma membrane"/>
    <property type="evidence" value="ECO:0007669"/>
    <property type="project" value="TreeGrafter"/>
</dbReference>
<dbReference type="GO" id="GO:0005524">
    <property type="term" value="F:ATP binding"/>
    <property type="evidence" value="ECO:0007669"/>
    <property type="project" value="UniProtKB-UniRule"/>
</dbReference>
<dbReference type="GO" id="GO:0016887">
    <property type="term" value="F:ATP hydrolysis activity"/>
    <property type="evidence" value="ECO:0007669"/>
    <property type="project" value="InterPro"/>
</dbReference>
<dbReference type="GO" id="GO:0003688">
    <property type="term" value="F:DNA replication origin binding"/>
    <property type="evidence" value="ECO:0007669"/>
    <property type="project" value="UniProtKB-UniRule"/>
</dbReference>
<dbReference type="GO" id="GO:0008289">
    <property type="term" value="F:lipid binding"/>
    <property type="evidence" value="ECO:0007669"/>
    <property type="project" value="UniProtKB-KW"/>
</dbReference>
<dbReference type="GO" id="GO:0006270">
    <property type="term" value="P:DNA replication initiation"/>
    <property type="evidence" value="ECO:0007669"/>
    <property type="project" value="UniProtKB-UniRule"/>
</dbReference>
<dbReference type="GO" id="GO:0006275">
    <property type="term" value="P:regulation of DNA replication"/>
    <property type="evidence" value="ECO:0007669"/>
    <property type="project" value="UniProtKB-UniRule"/>
</dbReference>
<dbReference type="CDD" id="cd00009">
    <property type="entry name" value="AAA"/>
    <property type="match status" value="1"/>
</dbReference>
<dbReference type="CDD" id="cd06571">
    <property type="entry name" value="Bac_DnaA_C"/>
    <property type="match status" value="1"/>
</dbReference>
<dbReference type="FunFam" id="1.10.1750.10:FF:000001">
    <property type="entry name" value="Chromosomal replication initiator protein DnaA"/>
    <property type="match status" value="1"/>
</dbReference>
<dbReference type="FunFam" id="1.10.8.60:FF:000003">
    <property type="entry name" value="Chromosomal replication initiator protein DnaA"/>
    <property type="match status" value="1"/>
</dbReference>
<dbReference type="FunFam" id="3.30.300.180:FF:000001">
    <property type="entry name" value="Chromosomal replication initiator protein DnaA"/>
    <property type="match status" value="1"/>
</dbReference>
<dbReference type="FunFam" id="3.40.50.300:FF:000103">
    <property type="entry name" value="Chromosomal replication initiator protein DnaA"/>
    <property type="match status" value="1"/>
</dbReference>
<dbReference type="Gene3D" id="1.10.1750.10">
    <property type="match status" value="1"/>
</dbReference>
<dbReference type="Gene3D" id="1.10.8.60">
    <property type="match status" value="1"/>
</dbReference>
<dbReference type="Gene3D" id="3.30.300.180">
    <property type="match status" value="1"/>
</dbReference>
<dbReference type="Gene3D" id="3.40.50.300">
    <property type="entry name" value="P-loop containing nucleotide triphosphate hydrolases"/>
    <property type="match status" value="1"/>
</dbReference>
<dbReference type="HAMAP" id="MF_00377">
    <property type="entry name" value="DnaA_bact"/>
    <property type="match status" value="1"/>
</dbReference>
<dbReference type="InterPro" id="IPR003593">
    <property type="entry name" value="AAA+_ATPase"/>
</dbReference>
<dbReference type="InterPro" id="IPR001957">
    <property type="entry name" value="Chromosome_initiator_DnaA"/>
</dbReference>
<dbReference type="InterPro" id="IPR020591">
    <property type="entry name" value="Chromosome_initiator_DnaA-like"/>
</dbReference>
<dbReference type="InterPro" id="IPR018312">
    <property type="entry name" value="Chromosome_initiator_DnaA_CS"/>
</dbReference>
<dbReference type="InterPro" id="IPR013159">
    <property type="entry name" value="DnaA_C"/>
</dbReference>
<dbReference type="InterPro" id="IPR013317">
    <property type="entry name" value="DnaA_dom"/>
</dbReference>
<dbReference type="InterPro" id="IPR024633">
    <property type="entry name" value="DnaA_N_dom"/>
</dbReference>
<dbReference type="InterPro" id="IPR038454">
    <property type="entry name" value="DnaA_N_sf"/>
</dbReference>
<dbReference type="InterPro" id="IPR027417">
    <property type="entry name" value="P-loop_NTPase"/>
</dbReference>
<dbReference type="InterPro" id="IPR010921">
    <property type="entry name" value="Trp_repressor/repl_initiator"/>
</dbReference>
<dbReference type="NCBIfam" id="TIGR00362">
    <property type="entry name" value="DnaA"/>
    <property type="match status" value="1"/>
</dbReference>
<dbReference type="PANTHER" id="PTHR30050">
    <property type="entry name" value="CHROMOSOMAL REPLICATION INITIATOR PROTEIN DNAA"/>
    <property type="match status" value="1"/>
</dbReference>
<dbReference type="PANTHER" id="PTHR30050:SF2">
    <property type="entry name" value="CHROMOSOMAL REPLICATION INITIATOR PROTEIN DNAA"/>
    <property type="match status" value="1"/>
</dbReference>
<dbReference type="Pfam" id="PF00308">
    <property type="entry name" value="Bac_DnaA"/>
    <property type="match status" value="1"/>
</dbReference>
<dbReference type="Pfam" id="PF08299">
    <property type="entry name" value="Bac_DnaA_C"/>
    <property type="match status" value="1"/>
</dbReference>
<dbReference type="Pfam" id="PF11638">
    <property type="entry name" value="DnaA_N"/>
    <property type="match status" value="1"/>
</dbReference>
<dbReference type="PRINTS" id="PR00051">
    <property type="entry name" value="DNAA"/>
</dbReference>
<dbReference type="SMART" id="SM00382">
    <property type="entry name" value="AAA"/>
    <property type="match status" value="1"/>
</dbReference>
<dbReference type="SMART" id="SM00760">
    <property type="entry name" value="Bac_DnaA_C"/>
    <property type="match status" value="1"/>
</dbReference>
<dbReference type="SUPFAM" id="SSF52540">
    <property type="entry name" value="P-loop containing nucleoside triphosphate hydrolases"/>
    <property type="match status" value="1"/>
</dbReference>
<dbReference type="SUPFAM" id="SSF48295">
    <property type="entry name" value="TrpR-like"/>
    <property type="match status" value="1"/>
</dbReference>
<dbReference type="PROSITE" id="PS01008">
    <property type="entry name" value="DNAA"/>
    <property type="match status" value="1"/>
</dbReference>
<organism>
    <name type="scientific">Aeromonas hydrophila subsp. hydrophila (strain ATCC 7966 / DSM 30187 / BCRC 13018 / CCUG 14551 / JCM 1027 / KCTC 2358 / NCIMB 9240 / NCTC 8049)</name>
    <dbReference type="NCBI Taxonomy" id="380703"/>
    <lineage>
        <taxon>Bacteria</taxon>
        <taxon>Pseudomonadati</taxon>
        <taxon>Pseudomonadota</taxon>
        <taxon>Gammaproteobacteria</taxon>
        <taxon>Aeromonadales</taxon>
        <taxon>Aeromonadaceae</taxon>
        <taxon>Aeromonas</taxon>
    </lineage>
</organism>
<sequence length="456" mass="51865">MTASLWQQCLNRLQDELPSAEFSMWIRPLQAELSDNTLTLYAPNRFVLDWVRDKYLIRVNGIINELCGVDGPTLRFDIGNRPHPVAVARAPARGADPVNNSQKSWESKAEAKPEPNHKSNTNVNYTFENFVEGKSNQLARAAARQVADNPGGAYNPLFLYGGTGLGKTHLLHAVGNAIKERKQDAKVIYMHSERFVQDMVKALQNNAIEEFKRYYRSVDALLIDDIQFFANKERSQEEFFHTFNALLEGNQQIILTSDRYPKEINGVEDRLKSRFGWGLTVAIEPPELETRVAILMRKADENQIHLPDEVAFFIAKRLRSNVRELEGALNRVIANANFTGRAINIDFVREALRDLLALQEKLVTIDNIQKTVAEYYKIKLADLLSKRRSRSVARPRQLAMALAKELTNHSLPEIGDAFGGRDHTTVLHACRKIEQLKEESHDIKEDYSNLIRTLSS</sequence>
<reference key="1">
    <citation type="journal article" date="2006" name="J. Bacteriol.">
        <title>Genome sequence of Aeromonas hydrophila ATCC 7966T: jack of all trades.</title>
        <authorList>
            <person name="Seshadri R."/>
            <person name="Joseph S.W."/>
            <person name="Chopra A.K."/>
            <person name="Sha J."/>
            <person name="Shaw J."/>
            <person name="Graf J."/>
            <person name="Haft D.H."/>
            <person name="Wu M."/>
            <person name="Ren Q."/>
            <person name="Rosovitz M.J."/>
            <person name="Madupu R."/>
            <person name="Tallon L."/>
            <person name="Kim M."/>
            <person name="Jin S."/>
            <person name="Vuong H."/>
            <person name="Stine O.C."/>
            <person name="Ali A."/>
            <person name="Horneman A.J."/>
            <person name="Heidelberg J.F."/>
        </authorList>
    </citation>
    <scope>NUCLEOTIDE SEQUENCE [LARGE SCALE GENOMIC DNA]</scope>
    <source>
        <strain>ATCC 7966 / DSM 30187 / BCRC 13018 / CCUG 14551 / JCM 1027 / KCTC 2358 / NCIMB 9240 / NCTC 8049</strain>
    </source>
</reference>
<feature type="chain" id="PRO_1000048599" description="Chromosomal replication initiator protein DnaA">
    <location>
        <begin position="1"/>
        <end position="456"/>
    </location>
</feature>
<feature type="region of interest" description="Domain I, interacts with DnaA modulators" evidence="1">
    <location>
        <begin position="1"/>
        <end position="83"/>
    </location>
</feature>
<feature type="region of interest" description="Domain II" evidence="1">
    <location>
        <begin position="83"/>
        <end position="119"/>
    </location>
</feature>
<feature type="region of interest" description="Disordered" evidence="2">
    <location>
        <begin position="92"/>
        <end position="122"/>
    </location>
</feature>
<feature type="region of interest" description="Domain III, AAA+ region" evidence="1">
    <location>
        <begin position="120"/>
        <end position="336"/>
    </location>
</feature>
<feature type="region of interest" description="Domain IV, binds dsDNA" evidence="1">
    <location>
        <begin position="337"/>
        <end position="456"/>
    </location>
</feature>
<feature type="compositionally biased region" description="Basic and acidic residues" evidence="2">
    <location>
        <begin position="105"/>
        <end position="117"/>
    </location>
</feature>
<feature type="binding site" evidence="1">
    <location>
        <position position="164"/>
    </location>
    <ligand>
        <name>ATP</name>
        <dbReference type="ChEBI" id="CHEBI:30616"/>
    </ligand>
</feature>
<feature type="binding site" evidence="1">
    <location>
        <position position="166"/>
    </location>
    <ligand>
        <name>ATP</name>
        <dbReference type="ChEBI" id="CHEBI:30616"/>
    </ligand>
</feature>
<feature type="binding site" evidence="1">
    <location>
        <position position="167"/>
    </location>
    <ligand>
        <name>ATP</name>
        <dbReference type="ChEBI" id="CHEBI:30616"/>
    </ligand>
</feature>
<feature type="binding site" evidence="1">
    <location>
        <position position="168"/>
    </location>
    <ligand>
        <name>ATP</name>
        <dbReference type="ChEBI" id="CHEBI:30616"/>
    </ligand>
</feature>
<gene>
    <name evidence="1" type="primary">dnaA</name>
    <name type="ordered locus">AHA_0001</name>
</gene>
<name>DNAA_AERHH</name>
<protein>
    <recommendedName>
        <fullName evidence="1">Chromosomal replication initiator protein DnaA</fullName>
    </recommendedName>
</protein>
<accession>A0KEC3</accession>
<keyword id="KW-0067">ATP-binding</keyword>
<keyword id="KW-0963">Cytoplasm</keyword>
<keyword id="KW-0235">DNA replication</keyword>
<keyword id="KW-0238">DNA-binding</keyword>
<keyword id="KW-0446">Lipid-binding</keyword>
<keyword id="KW-0547">Nucleotide-binding</keyword>
<keyword id="KW-1185">Reference proteome</keyword>
<evidence type="ECO:0000255" key="1">
    <source>
        <dbReference type="HAMAP-Rule" id="MF_00377"/>
    </source>
</evidence>
<evidence type="ECO:0000256" key="2">
    <source>
        <dbReference type="SAM" id="MobiDB-lite"/>
    </source>
</evidence>
<comment type="function">
    <text evidence="1">Plays an essential role in the initiation and regulation of chromosomal replication. ATP-DnaA binds to the origin of replication (oriC) to initiate formation of the DNA replication initiation complex once per cell cycle. Binds the DnaA box (a 9 base pair repeat at the origin) and separates the double-stranded (ds)DNA. Forms a right-handed helical filament on oriC DNA; dsDNA binds to the exterior of the filament while single-stranded (ss)DNA is stabiized in the filament's interior. The ATP-DnaA-oriC complex binds and stabilizes one strand of the AT-rich DNA unwinding element (DUE), permitting loading of DNA polymerase. After initiation quickly degrades to an ADP-DnaA complex that is not apt for DNA replication. Binds acidic phospholipids.</text>
</comment>
<comment type="subunit">
    <text evidence="1">Oligomerizes as a right-handed, spiral filament on DNA at oriC.</text>
</comment>
<comment type="subcellular location">
    <subcellularLocation>
        <location evidence="1">Cytoplasm</location>
    </subcellularLocation>
</comment>
<comment type="domain">
    <text evidence="1">Domain I is involved in oligomerization and binding regulators, domain II is flexibile and of varying length in different bacteria, domain III forms the AAA+ region, while domain IV binds dsDNA.</text>
</comment>
<comment type="similarity">
    <text evidence="1">Belongs to the DnaA family.</text>
</comment>